<comment type="function">
    <text evidence="1">Catalyzes a mechanistically unusual reaction, the ATP-dependent insertion of CO2 between the N7 and N8 nitrogen atoms of 7,8-diaminopelargonic acid (DAPA, also called 7,8-diammoniononanoate) to form a ureido ring.</text>
</comment>
<comment type="catalytic activity">
    <reaction evidence="1">
        <text>(7R,8S)-7,8-diammoniononanoate + CO2 + ATP = (4R,5S)-dethiobiotin + ADP + phosphate + 3 H(+)</text>
        <dbReference type="Rhea" id="RHEA:15805"/>
        <dbReference type="ChEBI" id="CHEBI:15378"/>
        <dbReference type="ChEBI" id="CHEBI:16526"/>
        <dbReference type="ChEBI" id="CHEBI:30616"/>
        <dbReference type="ChEBI" id="CHEBI:43474"/>
        <dbReference type="ChEBI" id="CHEBI:149469"/>
        <dbReference type="ChEBI" id="CHEBI:149473"/>
        <dbReference type="ChEBI" id="CHEBI:456216"/>
        <dbReference type="EC" id="6.3.3.3"/>
    </reaction>
</comment>
<comment type="cofactor">
    <cofactor evidence="1">
        <name>Mg(2+)</name>
        <dbReference type="ChEBI" id="CHEBI:18420"/>
    </cofactor>
</comment>
<comment type="pathway">
    <text evidence="1">Cofactor biosynthesis; biotin biosynthesis; biotin from 7,8-diaminononanoate: step 1/2.</text>
</comment>
<comment type="subunit">
    <text evidence="1">Homodimer.</text>
</comment>
<comment type="subcellular location">
    <subcellularLocation>
        <location evidence="1">Cytoplasm</location>
    </subcellularLocation>
</comment>
<comment type="similarity">
    <text evidence="1">Belongs to the dethiobiotin synthetase family.</text>
</comment>
<accession>A8L2N1</accession>
<organism>
    <name type="scientific">Parafrankia sp. (strain EAN1pec)</name>
    <dbReference type="NCBI Taxonomy" id="298653"/>
    <lineage>
        <taxon>Bacteria</taxon>
        <taxon>Bacillati</taxon>
        <taxon>Actinomycetota</taxon>
        <taxon>Actinomycetes</taxon>
        <taxon>Frankiales</taxon>
        <taxon>Frankiaceae</taxon>
        <taxon>Parafrankia</taxon>
    </lineage>
</organism>
<evidence type="ECO:0000255" key="1">
    <source>
        <dbReference type="HAMAP-Rule" id="MF_00336"/>
    </source>
</evidence>
<keyword id="KW-0067">ATP-binding</keyword>
<keyword id="KW-0093">Biotin biosynthesis</keyword>
<keyword id="KW-0963">Cytoplasm</keyword>
<keyword id="KW-0436">Ligase</keyword>
<keyword id="KW-0460">Magnesium</keyword>
<keyword id="KW-0479">Metal-binding</keyword>
<keyword id="KW-0547">Nucleotide-binding</keyword>
<feature type="chain" id="PRO_1000119871" description="ATP-dependent dethiobiotin synthetase BioD">
    <location>
        <begin position="1"/>
        <end position="238"/>
    </location>
</feature>
<feature type="active site" evidence="1">
    <location>
        <position position="37"/>
    </location>
</feature>
<feature type="binding site" evidence="1">
    <location>
        <begin position="12"/>
        <end position="17"/>
    </location>
    <ligand>
        <name>ATP</name>
        <dbReference type="ChEBI" id="CHEBI:30616"/>
    </ligand>
</feature>
<feature type="binding site" evidence="1">
    <location>
        <position position="16"/>
    </location>
    <ligand>
        <name>Mg(2+)</name>
        <dbReference type="ChEBI" id="CHEBI:18420"/>
    </ligand>
</feature>
<feature type="binding site" evidence="1">
    <location>
        <position position="41"/>
    </location>
    <ligand>
        <name>substrate</name>
    </ligand>
</feature>
<feature type="binding site" evidence="1">
    <location>
        <position position="50"/>
    </location>
    <ligand>
        <name>ATP</name>
        <dbReference type="ChEBI" id="CHEBI:30616"/>
    </ligand>
</feature>
<feature type="binding site" evidence="1">
    <location>
        <position position="50"/>
    </location>
    <ligand>
        <name>Mg(2+)</name>
        <dbReference type="ChEBI" id="CHEBI:18420"/>
    </ligand>
</feature>
<feature type="binding site" evidence="1">
    <location>
        <begin position="109"/>
        <end position="112"/>
    </location>
    <ligand>
        <name>ATP</name>
        <dbReference type="ChEBI" id="CHEBI:30616"/>
    </ligand>
</feature>
<feature type="binding site" evidence="1">
    <location>
        <position position="109"/>
    </location>
    <ligand>
        <name>Mg(2+)</name>
        <dbReference type="ChEBI" id="CHEBI:18420"/>
    </ligand>
</feature>
<feature type="binding site" evidence="1">
    <location>
        <begin position="170"/>
        <end position="171"/>
    </location>
    <ligand>
        <name>ATP</name>
        <dbReference type="ChEBI" id="CHEBI:30616"/>
    </ligand>
</feature>
<feature type="binding site" evidence="1">
    <location>
        <begin position="200"/>
        <end position="202"/>
    </location>
    <ligand>
        <name>ATP</name>
        <dbReference type="ChEBI" id="CHEBI:30616"/>
    </ligand>
</feature>
<gene>
    <name evidence="1" type="primary">bioD</name>
    <name type="ordered locus">Franean1_0968</name>
</gene>
<dbReference type="EC" id="6.3.3.3" evidence="1"/>
<dbReference type="EMBL" id="CP000820">
    <property type="protein sequence ID" value="ABW10424.1"/>
    <property type="molecule type" value="Genomic_DNA"/>
</dbReference>
<dbReference type="RefSeq" id="WP_020458611.1">
    <property type="nucleotide sequence ID" value="NC_009921.1"/>
</dbReference>
<dbReference type="SMR" id="A8L2N1"/>
<dbReference type="STRING" id="298653.Franean1_0968"/>
<dbReference type="KEGG" id="fre:Franean1_0968"/>
<dbReference type="eggNOG" id="COG0132">
    <property type="taxonomic scope" value="Bacteria"/>
</dbReference>
<dbReference type="HOGENOM" id="CLU_072551_1_0_11"/>
<dbReference type="UniPathway" id="UPA00078">
    <property type="reaction ID" value="UER00161"/>
</dbReference>
<dbReference type="GO" id="GO:0005829">
    <property type="term" value="C:cytosol"/>
    <property type="evidence" value="ECO:0007669"/>
    <property type="project" value="TreeGrafter"/>
</dbReference>
<dbReference type="GO" id="GO:0005524">
    <property type="term" value="F:ATP binding"/>
    <property type="evidence" value="ECO:0007669"/>
    <property type="project" value="UniProtKB-UniRule"/>
</dbReference>
<dbReference type="GO" id="GO:0004141">
    <property type="term" value="F:dethiobiotin synthase activity"/>
    <property type="evidence" value="ECO:0007669"/>
    <property type="project" value="UniProtKB-UniRule"/>
</dbReference>
<dbReference type="GO" id="GO:0000287">
    <property type="term" value="F:magnesium ion binding"/>
    <property type="evidence" value="ECO:0007669"/>
    <property type="project" value="UniProtKB-UniRule"/>
</dbReference>
<dbReference type="GO" id="GO:0009102">
    <property type="term" value="P:biotin biosynthetic process"/>
    <property type="evidence" value="ECO:0007669"/>
    <property type="project" value="UniProtKB-UniRule"/>
</dbReference>
<dbReference type="CDD" id="cd03109">
    <property type="entry name" value="DTBS"/>
    <property type="match status" value="1"/>
</dbReference>
<dbReference type="Gene3D" id="3.40.50.300">
    <property type="entry name" value="P-loop containing nucleotide triphosphate hydrolases"/>
    <property type="match status" value="1"/>
</dbReference>
<dbReference type="HAMAP" id="MF_00336">
    <property type="entry name" value="BioD"/>
    <property type="match status" value="1"/>
</dbReference>
<dbReference type="InterPro" id="IPR004472">
    <property type="entry name" value="DTB_synth_BioD"/>
</dbReference>
<dbReference type="InterPro" id="IPR027417">
    <property type="entry name" value="P-loop_NTPase"/>
</dbReference>
<dbReference type="NCBIfam" id="TIGR00347">
    <property type="entry name" value="bioD"/>
    <property type="match status" value="1"/>
</dbReference>
<dbReference type="PANTHER" id="PTHR43210">
    <property type="entry name" value="DETHIOBIOTIN SYNTHETASE"/>
    <property type="match status" value="1"/>
</dbReference>
<dbReference type="PANTHER" id="PTHR43210:SF5">
    <property type="entry name" value="DETHIOBIOTIN SYNTHETASE"/>
    <property type="match status" value="1"/>
</dbReference>
<dbReference type="Pfam" id="PF13500">
    <property type="entry name" value="AAA_26"/>
    <property type="match status" value="1"/>
</dbReference>
<dbReference type="PIRSF" id="PIRSF006755">
    <property type="entry name" value="DTB_synth"/>
    <property type="match status" value="1"/>
</dbReference>
<dbReference type="SUPFAM" id="SSF52540">
    <property type="entry name" value="P-loop containing nucleoside triphosphate hydrolases"/>
    <property type="match status" value="1"/>
</dbReference>
<reference key="1">
    <citation type="journal article" date="2007" name="Genome Res.">
        <title>Genome characteristics of facultatively symbiotic Frankia sp. strains reflect host range and host plant biogeography.</title>
        <authorList>
            <person name="Normand P."/>
            <person name="Lapierre P."/>
            <person name="Tisa L.S."/>
            <person name="Gogarten J.P."/>
            <person name="Alloisio N."/>
            <person name="Bagnarol E."/>
            <person name="Bassi C.A."/>
            <person name="Berry A.M."/>
            <person name="Bickhart D.M."/>
            <person name="Choisne N."/>
            <person name="Couloux A."/>
            <person name="Cournoyer B."/>
            <person name="Cruveiller S."/>
            <person name="Daubin V."/>
            <person name="Demange N."/>
            <person name="Francino M.P."/>
            <person name="Goltsman E."/>
            <person name="Huang Y."/>
            <person name="Kopp O.R."/>
            <person name="Labarre L."/>
            <person name="Lapidus A."/>
            <person name="Lavire C."/>
            <person name="Marechal J."/>
            <person name="Martinez M."/>
            <person name="Mastronunzio J.E."/>
            <person name="Mullin B.C."/>
            <person name="Niemann J."/>
            <person name="Pujic P."/>
            <person name="Rawnsley T."/>
            <person name="Rouy Z."/>
            <person name="Schenowitz C."/>
            <person name="Sellstedt A."/>
            <person name="Tavares F."/>
            <person name="Tomkins J.P."/>
            <person name="Vallenet D."/>
            <person name="Valverde C."/>
            <person name="Wall L.G."/>
            <person name="Wang Y."/>
            <person name="Medigue C."/>
            <person name="Benson D.R."/>
        </authorList>
    </citation>
    <scope>NUCLEOTIDE SEQUENCE [LARGE SCALE GENOMIC DNA]</scope>
    <source>
        <strain>EAN1pec</strain>
    </source>
</reference>
<proteinExistence type="inferred from homology"/>
<sequence>MSVLIVTGTGTEVGKTVVTAALAALAADRGTAVAVVKPAQTGVRAGELGDVDLVRDLSGVDDVHELSRYADPLAPVSAARRAGLPTPDLGTVAVAVRRLQADRGLVLVEGAGGLLVRYDHDGSTLADLARTLAAPVLVVTTAGLGTLNATALTLEVMANRGLDLAGIVVGSWPVEPDLAARSNIVDLELLAARPLAGAVPAGAGLLGTGQFLQIARSSLEPALGGAFNAAEFRRRYAV</sequence>
<protein>
    <recommendedName>
        <fullName evidence="1">ATP-dependent dethiobiotin synthetase BioD</fullName>
        <ecNumber evidence="1">6.3.3.3</ecNumber>
    </recommendedName>
    <alternativeName>
        <fullName evidence="1">DTB synthetase</fullName>
        <shortName evidence="1">DTBS</shortName>
    </alternativeName>
    <alternativeName>
        <fullName evidence="1">Dethiobiotin synthase</fullName>
    </alternativeName>
</protein>
<name>BIOD_PARS2</name>